<comment type="similarity">
    <text evidence="1">Belongs to the AIM32 family.</text>
</comment>
<proteinExistence type="inferred from homology"/>
<dbReference type="EMBL" id="CH408077">
    <property type="protein sequence ID" value="EEQ37926.1"/>
    <property type="molecule type" value="Genomic_DNA"/>
</dbReference>
<dbReference type="RefSeq" id="XP_002618590.1">
    <property type="nucleotide sequence ID" value="XM_002618544.1"/>
</dbReference>
<dbReference type="SMR" id="C4Y1G7"/>
<dbReference type="FunCoup" id="C4Y1G7">
    <property type="interactions" value="13"/>
</dbReference>
<dbReference type="STRING" id="306902.C4Y1G7"/>
<dbReference type="GeneID" id="8498883"/>
<dbReference type="KEGG" id="clu:CLUG_02049"/>
<dbReference type="VEuPathDB" id="FungiDB:CLUG_02049"/>
<dbReference type="HOGENOM" id="CLU_044499_1_0_1"/>
<dbReference type="InParanoid" id="C4Y1G7"/>
<dbReference type="OMA" id="IWYGRVF"/>
<dbReference type="OrthoDB" id="25668at4891"/>
<dbReference type="Proteomes" id="UP000007703">
    <property type="component" value="Unassembled WGS sequence"/>
</dbReference>
<dbReference type="CDD" id="cd03062">
    <property type="entry name" value="TRX_Fd_Sucrase"/>
    <property type="match status" value="1"/>
</dbReference>
<dbReference type="Gene3D" id="3.40.30.10">
    <property type="entry name" value="Glutaredoxin"/>
    <property type="match status" value="1"/>
</dbReference>
<dbReference type="InterPro" id="IPR009737">
    <property type="entry name" value="Aim32/Apd1-like"/>
</dbReference>
<dbReference type="InterPro" id="IPR036249">
    <property type="entry name" value="Thioredoxin-like_sf"/>
</dbReference>
<dbReference type="PANTHER" id="PTHR31902">
    <property type="entry name" value="ACTIN PATCHES DISTAL PROTEIN 1"/>
    <property type="match status" value="1"/>
</dbReference>
<dbReference type="PANTHER" id="PTHR31902:SF7">
    <property type="entry name" value="ALTERED INHERITANCE OF MITOCHONDRIA PROTEIN 32"/>
    <property type="match status" value="1"/>
</dbReference>
<dbReference type="Pfam" id="PF06999">
    <property type="entry name" value="Suc_Fer-like"/>
    <property type="match status" value="1"/>
</dbReference>
<dbReference type="SUPFAM" id="SSF52833">
    <property type="entry name" value="Thioredoxin-like"/>
    <property type="match status" value="1"/>
</dbReference>
<name>AIM32_CLAL4</name>
<reference key="1">
    <citation type="journal article" date="2009" name="Nature">
        <title>Evolution of pathogenicity and sexual reproduction in eight Candida genomes.</title>
        <authorList>
            <person name="Butler G."/>
            <person name="Rasmussen M.D."/>
            <person name="Lin M.F."/>
            <person name="Santos M.A.S."/>
            <person name="Sakthikumar S."/>
            <person name="Munro C.A."/>
            <person name="Rheinbay E."/>
            <person name="Grabherr M."/>
            <person name="Forche A."/>
            <person name="Reedy J.L."/>
            <person name="Agrafioti I."/>
            <person name="Arnaud M.B."/>
            <person name="Bates S."/>
            <person name="Brown A.J.P."/>
            <person name="Brunke S."/>
            <person name="Costanzo M.C."/>
            <person name="Fitzpatrick D.A."/>
            <person name="de Groot P.W.J."/>
            <person name="Harris D."/>
            <person name="Hoyer L.L."/>
            <person name="Hube B."/>
            <person name="Klis F.M."/>
            <person name="Kodira C."/>
            <person name="Lennard N."/>
            <person name="Logue M.E."/>
            <person name="Martin R."/>
            <person name="Neiman A.M."/>
            <person name="Nikolaou E."/>
            <person name="Quail M.A."/>
            <person name="Quinn J."/>
            <person name="Santos M.C."/>
            <person name="Schmitzberger F.F."/>
            <person name="Sherlock G."/>
            <person name="Shah P."/>
            <person name="Silverstein K.A.T."/>
            <person name="Skrzypek M.S."/>
            <person name="Soll D."/>
            <person name="Staggs R."/>
            <person name="Stansfield I."/>
            <person name="Stumpf M.P.H."/>
            <person name="Sudbery P.E."/>
            <person name="Srikantha T."/>
            <person name="Zeng Q."/>
            <person name="Berman J."/>
            <person name="Berriman M."/>
            <person name="Heitman J."/>
            <person name="Gow N.A.R."/>
            <person name="Lorenz M.C."/>
            <person name="Birren B.W."/>
            <person name="Kellis M."/>
            <person name="Cuomo C.A."/>
        </authorList>
    </citation>
    <scope>NUCLEOTIDE SEQUENCE [LARGE SCALE GENOMIC DNA]</scope>
    <source>
        <strain>ATCC 42720</strain>
    </source>
</reference>
<evidence type="ECO:0000305" key="1"/>
<gene>
    <name type="primary">AIM32</name>
    <name type="ORF">CLUG_02049</name>
</gene>
<accession>C4Y1G7</accession>
<keyword id="KW-1185">Reference proteome</keyword>
<protein>
    <recommendedName>
        <fullName>Altered inheritance of mitochondria protein 32</fullName>
    </recommendedName>
</protein>
<feature type="chain" id="PRO_0000399695" description="Altered inheritance of mitochondria protein 32">
    <location>
        <begin position="1"/>
        <end position="273"/>
    </location>
</feature>
<sequence>MFRRVRPYSTFIDKCPPPAYDTGCTYCKVPAFPPDKRLDATTHLNGTAPSMWKHVLAFSHGVATFDTMPPKINLVPGSLASEFEVLRRKMLSPQHPVTLSNAIVSGIDGGTHQKVFIYPDCIQVEFKLANLPEFIQHYLLPVQETESVFNPFASANATPHTKVERPHLFQETPIHKDLVLICGHTQRDIRCGRIAPLLLQEFERVLAHEKLDVDVGLVSHIGGHAYAGNVIYFSKHQPPVWYGRVFPEQVQGIVRETIVEGRIIKELYRGQTM</sequence>
<organism>
    <name type="scientific">Clavispora lusitaniae (strain ATCC 42720)</name>
    <name type="common">Yeast</name>
    <name type="synonym">Candida lusitaniae</name>
    <dbReference type="NCBI Taxonomy" id="306902"/>
    <lineage>
        <taxon>Eukaryota</taxon>
        <taxon>Fungi</taxon>
        <taxon>Dikarya</taxon>
        <taxon>Ascomycota</taxon>
        <taxon>Saccharomycotina</taxon>
        <taxon>Pichiomycetes</taxon>
        <taxon>Metschnikowiaceae</taxon>
        <taxon>Clavispora</taxon>
    </lineage>
</organism>